<protein>
    <recommendedName>
        <fullName>Pro-secreted protein ORF2</fullName>
    </recommendedName>
    <alternativeName>
        <fullName>Protein ORF2</fullName>
        <shortName>pORF2</shortName>
    </alternativeName>
    <component>
        <recommendedName>
            <fullName>Secreted protein ORF2</fullName>
            <shortName>ORF2s</shortName>
        </recommendedName>
    </component>
</protein>
<keyword id="KW-0002">3D-structure</keyword>
<keyword id="KW-0024">Alternative initiation</keyword>
<keyword id="KW-0167">Capsid protein</keyword>
<keyword id="KW-0325">Glycoprotein</keyword>
<keyword id="KW-1035">Host cytoplasm</keyword>
<keyword id="KW-1038">Host endoplasmic reticulum</keyword>
<keyword id="KW-1040">Host Golgi apparatus</keyword>
<keyword id="KW-1048">Host nucleus</keyword>
<keyword id="KW-0694">RNA-binding</keyword>
<keyword id="KW-0964">Secreted</keyword>
<keyword id="KW-0732">Signal</keyword>
<keyword id="KW-1140">T=1 icosahedral capsid protein</keyword>
<keyword id="KW-0946">Virion</keyword>
<organismHost>
    <name type="scientific">Bandicota bengalensis</name>
    <name type="common">lesser bandicoot rat</name>
    <dbReference type="NCBI Taxonomy" id="69079"/>
</organismHost>
<organismHost>
    <name type="scientific">Callithrix</name>
    <dbReference type="NCBI Taxonomy" id="9481"/>
</organismHost>
<organismHost>
    <name type="scientific">Cercopithecus hamlyni</name>
    <name type="common">Owl-faced monkey</name>
    <name type="synonym">Hamlyn's monkey</name>
    <dbReference type="NCBI Taxonomy" id="9536"/>
</organismHost>
<organismHost>
    <name type="scientific">Chlorocebus aethiops</name>
    <name type="common">Green monkey</name>
    <name type="synonym">Cercopithecus aethiops</name>
    <dbReference type="NCBI Taxonomy" id="9534"/>
</organismHost>
<organismHost>
    <name type="scientific">Gallus gallus</name>
    <name type="common">Chicken</name>
    <dbReference type="NCBI Taxonomy" id="9031"/>
</organismHost>
<organismHost>
    <name type="scientific">Homo sapiens</name>
    <name type="common">Human</name>
    <dbReference type="NCBI Taxonomy" id="9606"/>
</organismHost>
<organismHost>
    <name type="scientific">Macaca</name>
    <name type="common">macaques</name>
    <dbReference type="NCBI Taxonomy" id="9539"/>
</organismHost>
<organismHost>
    <name type="scientific">Mus musculus</name>
    <name type="common">Mouse</name>
    <dbReference type="NCBI Taxonomy" id="10090"/>
</organismHost>
<organismHost>
    <name type="scientific">Pan troglodytes</name>
    <name type="common">Chimpanzee</name>
    <dbReference type="NCBI Taxonomy" id="9598"/>
</organismHost>
<organismHost>
    <name type="scientific">Saimiri</name>
    <name type="common">squirrel monkeys</name>
    <dbReference type="NCBI Taxonomy" id="9520"/>
</organismHost>
<organismHost>
    <name type="scientific">Sus scrofa</name>
    <name type="common">Pig</name>
    <dbReference type="NCBI Taxonomy" id="9823"/>
</organismHost>
<feature type="signal peptide" evidence="6">
    <location>
        <begin position="1"/>
        <end position="19"/>
    </location>
</feature>
<feature type="chain" id="PRO_0000334537" description="Pro-secreted protein ORF2">
    <location>
        <begin position="20"/>
        <end position="658"/>
    </location>
</feature>
<feature type="chain" id="PRO_0000456936" description="Secreted protein ORF2" evidence="2">
    <location>
        <begin position="34"/>
        <end position="658"/>
    </location>
</feature>
<feature type="region of interest" description="Disordered" evidence="7">
    <location>
        <begin position="62"/>
        <end position="124"/>
    </location>
</feature>
<feature type="region of interest" description="particle formation" evidence="1">
    <location>
        <begin position="366"/>
        <end position="392"/>
    </location>
</feature>
<feature type="region of interest" description="Oligomerization" evidence="1">
    <location>
        <begin position="583"/>
        <end position="608"/>
    </location>
</feature>
<feature type="compositionally biased region" description="Low complexity" evidence="7">
    <location>
        <begin position="91"/>
        <end position="122"/>
    </location>
</feature>
<feature type="site" description="Possible cleavage" evidence="4">
    <location>
        <begin position="576"/>
        <end position="577"/>
    </location>
</feature>
<feature type="site" description="Possible cleavage" evidence="4">
    <location>
        <begin position="599"/>
        <end position="600"/>
    </location>
</feature>
<feature type="glycosylation site" description="N-linked (GlcNAc...) asparagine; by host" evidence="3">
    <location>
        <position position="135"/>
    </location>
</feature>
<feature type="glycosylation site" description="N-linked (GlcNAc...) asparagine; by host" evidence="3">
    <location>
        <position position="308"/>
    </location>
</feature>
<feature type="glycosylation site" description="N-linked (GlcNAc...) asparagine; by host" evidence="3">
    <location>
        <position position="560"/>
    </location>
</feature>
<feature type="splice variant" id="VSP_061728" description="In isoform Capsid protein.">
    <location>
        <begin position="1"/>
        <end position="15"/>
    </location>
</feature>
<feature type="strand" evidence="10">
    <location>
        <begin position="129"/>
        <end position="137"/>
    </location>
</feature>
<feature type="strand" evidence="10">
    <location>
        <begin position="150"/>
        <end position="157"/>
    </location>
</feature>
<feature type="strand" evidence="10">
    <location>
        <begin position="165"/>
        <end position="169"/>
    </location>
</feature>
<feature type="helix" evidence="10">
    <location>
        <begin position="172"/>
        <end position="178"/>
    </location>
</feature>
<feature type="strand" evidence="10">
    <location>
        <begin position="180"/>
        <end position="194"/>
    </location>
</feature>
<feature type="strand" evidence="10">
    <location>
        <begin position="200"/>
        <end position="202"/>
    </location>
</feature>
<feature type="strand" evidence="10">
    <location>
        <begin position="204"/>
        <end position="211"/>
    </location>
</feature>
<feature type="helix" evidence="10">
    <location>
        <begin position="222"/>
        <end position="225"/>
    </location>
</feature>
<feature type="strand" evidence="10">
    <location>
        <begin position="228"/>
        <end position="234"/>
    </location>
</feature>
<feature type="strand" evidence="10">
    <location>
        <begin position="240"/>
        <end position="243"/>
    </location>
</feature>
<feature type="helix" evidence="10">
    <location>
        <begin position="246"/>
        <end position="250"/>
    </location>
</feature>
<feature type="helix" evidence="10">
    <location>
        <begin position="253"/>
        <end position="255"/>
    </location>
</feature>
<feature type="strand" evidence="10">
    <location>
        <begin position="257"/>
        <end position="259"/>
    </location>
</feature>
<feature type="helix" evidence="10">
    <location>
        <begin position="266"/>
        <end position="269"/>
    </location>
</feature>
<feature type="strand" evidence="10">
    <location>
        <begin position="273"/>
        <end position="280"/>
    </location>
</feature>
<feature type="turn" evidence="10">
    <location>
        <begin position="285"/>
        <end position="288"/>
    </location>
</feature>
<feature type="strand" evidence="10">
    <location>
        <begin position="293"/>
        <end position="306"/>
    </location>
</feature>
<feature type="strand" evidence="10">
    <location>
        <begin position="318"/>
        <end position="325"/>
    </location>
</feature>
<feature type="strand" evidence="10">
    <location>
        <begin position="328"/>
        <end position="331"/>
    </location>
</feature>
<feature type="strand" evidence="10">
    <location>
        <begin position="335"/>
        <end position="340"/>
    </location>
</feature>
<feature type="helix" evidence="10">
    <location>
        <begin position="342"/>
        <end position="344"/>
    </location>
</feature>
<feature type="helix" evidence="10">
    <location>
        <begin position="346"/>
        <end position="348"/>
    </location>
</feature>
<feature type="strand" evidence="10">
    <location>
        <begin position="349"/>
        <end position="352"/>
    </location>
</feature>
<feature type="strand" evidence="10">
    <location>
        <begin position="366"/>
        <end position="372"/>
    </location>
</feature>
<feature type="helix" evidence="10">
    <location>
        <begin position="375"/>
        <end position="378"/>
    </location>
</feature>
<feature type="helix" evidence="10">
    <location>
        <begin position="383"/>
        <end position="386"/>
    </location>
</feature>
<feature type="strand" evidence="10">
    <location>
        <begin position="388"/>
        <end position="392"/>
    </location>
</feature>
<feature type="strand" evidence="10">
    <location>
        <begin position="394"/>
        <end position="399"/>
    </location>
</feature>
<feature type="strand" evidence="10">
    <location>
        <begin position="407"/>
        <end position="413"/>
    </location>
</feature>
<feature type="helix" evidence="10">
    <location>
        <begin position="414"/>
        <end position="419"/>
    </location>
</feature>
<feature type="strand" evidence="10">
    <location>
        <begin position="433"/>
        <end position="442"/>
    </location>
</feature>
<feature type="turn" evidence="10">
    <location>
        <begin position="446"/>
        <end position="448"/>
    </location>
</feature>
<feature type="strand" evidence="10">
    <location>
        <begin position="453"/>
        <end position="455"/>
    </location>
</feature>
<feature type="strand" evidence="10">
    <location>
        <begin position="460"/>
        <end position="463"/>
    </location>
</feature>
<feature type="strand" evidence="10">
    <location>
        <begin position="468"/>
        <end position="479"/>
    </location>
</feature>
<feature type="strand" evidence="10">
    <location>
        <begin position="490"/>
        <end position="499"/>
    </location>
</feature>
<feature type="turn" evidence="10">
    <location>
        <begin position="501"/>
        <end position="503"/>
    </location>
</feature>
<feature type="strand" evidence="10">
    <location>
        <begin position="506"/>
        <end position="508"/>
    </location>
</feature>
<feature type="turn" evidence="10">
    <location>
        <begin position="509"/>
        <end position="511"/>
    </location>
</feature>
<feature type="helix" evidence="10">
    <location>
        <begin position="514"/>
        <end position="516"/>
    </location>
</feature>
<feature type="strand" evidence="10">
    <location>
        <begin position="526"/>
        <end position="529"/>
    </location>
</feature>
<feature type="strand" evidence="10">
    <location>
        <begin position="532"/>
        <end position="535"/>
    </location>
</feature>
<feature type="strand" evidence="10">
    <location>
        <begin position="537"/>
        <end position="541"/>
    </location>
</feature>
<feature type="strand" evidence="10">
    <location>
        <begin position="544"/>
        <end position="550"/>
    </location>
</feature>
<feature type="strand" evidence="10">
    <location>
        <begin position="566"/>
        <end position="570"/>
    </location>
</feature>
<feature type="strand" evidence="10">
    <location>
        <begin position="577"/>
        <end position="580"/>
    </location>
</feature>
<feature type="strand" evidence="10">
    <location>
        <begin position="593"/>
        <end position="599"/>
    </location>
</feature>
<reference key="1">
    <citation type="journal article" date="2000" name="J. Gen. Virol.">
        <title>The complete sequence of hepatitis E virus genotype 4 reveals an alternative strategy for translation of open reading frames 2 and 3.</title>
        <authorList>
            <person name="Wang Y."/>
            <person name="Zhang H."/>
            <person name="Ling R."/>
            <person name="Li H."/>
            <person name="Harrison T.J."/>
        </authorList>
    </citation>
    <scope>NUCLEOTIDE SEQUENCE [GENOMIC RNA]</scope>
</reference>
<reference evidence="9" key="2">
    <citation type="journal article" date="2009" name="Proc. Natl. Acad. Sci. U.S.A.">
        <title>Structure of the hepatitis E virus-like particle suggests mechanisms for virus assembly and receptor binding.</title>
        <authorList>
            <person name="Guu T.S."/>
            <person name="Liu Z."/>
            <person name="Ye Q."/>
            <person name="Mata D.A."/>
            <person name="Li K."/>
            <person name="Yin C."/>
            <person name="Zhang J."/>
            <person name="Tao Y.J."/>
        </authorList>
    </citation>
    <scope>X-RAY CRYSTALLOGRAPHY (3.50 ANGSTROMS) OF 110-606</scope>
</reference>
<organism>
    <name type="scientific">Hepatitis E virus genotype 4 (isolate Human/China/T1)</name>
    <name type="common">HEV-4</name>
    <name type="synonym">Hepatitis E virus genotype 4 (isolate Human/China/Ct1)</name>
    <dbReference type="NCBI Taxonomy" id="509627"/>
    <lineage>
        <taxon>Viruses</taxon>
        <taxon>Riboviria</taxon>
        <taxon>Orthornavirae</taxon>
        <taxon>Kitrinoviricota</taxon>
        <taxon>Alsuviricetes</taxon>
        <taxon>Hepelivirales</taxon>
        <taxon>Hepeviridae</taxon>
        <taxon>Orthohepevirinae</taxon>
        <taxon>Paslahepevirus</taxon>
        <taxon>Hepatitis E virus</taxon>
    </lineage>
</organism>
<proteinExistence type="evidence at protein level"/>
<accession>Q9IVZ8</accession>
<sequence length="658" mass="70761">MRSRALLFLLFVLLPMLPAPPAGQPSGRRRGQAGCGGGFWGDRVDSQPFALPYIHPTNPFASDIPAAAGTGARPRQPIRPLGSAWRDQSQRPAASTRRRPAPAGASPLTAVAPAPDTAPVPDADSRGAILRRQYNLSTSPLTSTIATGTNFVLYAAPLSPLLPLQDGTNTHIMATEASNYAQYRVVRATIRYRPLVPNAVGGYAISISFWPQTTTTPTSVDMNSITSTDVRILVQPGIASELVTPSERLHYRNQGWRSVETSGVAEEEATSGLVMLCIHGSPVNSYTNTPYTGALGLLDFALELEFRNLTPGNTNTRVSRYSSSARHKLRRGPDGTAELTTTAATRFMKDLHFTGTNGVGEVGRGIALTLFNLADTLLGGLPTELISSAGGQLFYSRPVVSANGELTVKLYTSVENAQQDKGVAIPHDIDLGESRVVIQDYDNQHEQDRPTPSPAPSRPFSVLRANDVLWLSLTAAEYDQTTYGSSTNPMYVSDTVTFVNVATGAQGVSRSLDWSKVTLDGRPLTTIQQYSKTFYVLPLRGKLSFWEAGTTKAGYPYNYNTTASDQILIENAAGHRVCISTYTTNLGSGPVSVSAVGVLAPHSALAALEDTADYPARAHTFDDFCPECRALGLQGCAFQSTVGELQRLKMKVGKTREY</sequence>
<evidence type="ECO:0000250" key="1">
    <source>
        <dbReference type="UniProtKB" id="P29326"/>
    </source>
</evidence>
<evidence type="ECO:0000250" key="2">
    <source>
        <dbReference type="UniProtKB" id="P33426"/>
    </source>
</evidence>
<evidence type="ECO:0000250" key="3">
    <source>
        <dbReference type="UniProtKB" id="Q68985"/>
    </source>
</evidence>
<evidence type="ECO:0000250" key="4">
    <source>
        <dbReference type="UniProtKB" id="Q81871"/>
    </source>
</evidence>
<evidence type="ECO:0000250" key="5">
    <source>
        <dbReference type="UniProtKB" id="Q9YLQ9"/>
    </source>
</evidence>
<evidence type="ECO:0000255" key="6"/>
<evidence type="ECO:0000256" key="7">
    <source>
        <dbReference type="SAM" id="MobiDB-lite"/>
    </source>
</evidence>
<evidence type="ECO:0000305" key="8"/>
<evidence type="ECO:0007744" key="9">
    <source>
        <dbReference type="PDB" id="3HAG"/>
    </source>
</evidence>
<evidence type="ECO:0007829" key="10">
    <source>
        <dbReference type="PDB" id="3HAG"/>
    </source>
</evidence>
<comment type="function">
    <molecule>Isoform Secreted protein ORF2</molecule>
    <text evidence="5">Plays a role in the inhibition of host antibody-mediated neutralization without blocking viral cell entry.</text>
</comment>
<comment type="function">
    <molecule>Isoform Capsid protein</molecule>
    <text evidence="1 2 4">Forms an icosahedral capsid with a T=1 symmetry and a 34 nm diameter. The capsid is composed of 60 copies linked to each other. Binds to the 5' end of the genomic RNA to mediate genome encapsidation (By similarity). Binds to heparin surface proteoglycans (HSPGs) to mediate viral entry. Additionally, the interactions with host ASGR1 and ASGR2 facilitate viral infection of hepatocytes (By similarity). Inhibits IFN production by blocking host TBK1-induced IRF3 phosphorylation (By similarity). The nuclear form probably modulates host gene expression (By similarity).</text>
</comment>
<comment type="subunit">
    <molecule>Isoform Secreted protein ORF2</molecule>
    <text evidence="5">Homodimer.</text>
</comment>
<comment type="subunit">
    <molecule>Isoform Capsid protein</molecule>
    <text evidence="3 4">Self-assembles to form the capsid. The capsid is dominated by dimers that define the 30 morphological units. Interacts with phosphorylated protein ORF3 (By similarity). Interacts with host TMEM134. Interacts with host ASGR1 and ASGR2; these interactions facilitate infection of host hepatocytes (By similarity).</text>
</comment>
<comment type="interaction">
    <interactant intactId="EBI-15794984">
        <id>Q9IVZ8</id>
    </interactant>
    <interactant intactId="EBI-15794984">
        <id>Q9IVZ8</id>
        <label>ORF2</label>
    </interactant>
    <organismsDiffer>false</organismsDiffer>
    <experiments>3</experiments>
</comment>
<comment type="subcellular location">
    <molecule>Isoform Secreted protein ORF2</molecule>
    <subcellularLocation>
        <location evidence="4">Secreted</location>
    </subcellularLocation>
    <text evidence="3">Cotranslationally translocated into the ER.</text>
</comment>
<comment type="subcellular location">
    <molecule>Isoform Capsid protein</molecule>
    <subcellularLocation>
        <location evidence="4">Virion</location>
    </subcellularLocation>
    <subcellularLocation>
        <location evidence="4">Host cytoplasm</location>
    </subcellularLocation>
    <subcellularLocation>
        <location evidence="4">Host endoplasmic reticulum</location>
    </subcellularLocation>
    <subcellularLocation>
        <location evidence="4">Host Golgi apparatus</location>
    </subcellularLocation>
    <subcellularLocation>
        <location evidence="3">Host cell surface</location>
    </subcellularLocation>
    <subcellularLocation>
        <location evidence="4">Host nucleus</location>
    </subcellularLocation>
    <text evidence="2 4 5">Translation from the internal AUG codon disrupts the signal sequence, producing a cytoplasmic protein that is responsible for virion assembly (By similarity). Shuttles between cytoplasm and nucleus (By similarity). This isoform is found in quasi-enveloped virions (By similarity).</text>
</comment>
<comment type="alternative products">
    <event type="alternative initiation"/>
    <isoform>
        <id>Q9IVZ8-1</id>
        <name>Secreted protein ORF2</name>
        <name>ORF2s</name>
        <name>ORF2g</name>
        <sequence type="displayed"/>
    </isoform>
    <isoform>
        <id>Q9IVZ8-2</id>
        <name>Capsid protein</name>
        <name>ORF2c</name>
        <name>ORF2i</name>
        <sequence type="described" ref="VSP_061728"/>
    </isoform>
</comment>
<comment type="domain">
    <text evidence="2">The Arginine-Rich Motif (ARM) acts as a nuclear localization signal that drives the nuclear translocation of isoform capsid protein. This motif has also been linked to the inhibition of host IRF3 phosphorylation.</text>
</comment>
<comment type="PTM">
    <molecule>Pro-secreted protein ORF2</molecule>
    <text evidence="2">Cleaved by host protease in the N-terminus.</text>
</comment>
<comment type="PTM">
    <molecule>Isoform Secreted protein ORF2</molecule>
    <text evidence="4">N-glycosylated.</text>
</comment>
<comment type="PTM">
    <molecule>Isoform Capsid protein</molecule>
    <text evidence="4">Not N-glycosylated. The C-terminus of the capsid protein ORF2 is truncated in non-enveloped virions shedded in feces, probably due to host proteases.</text>
</comment>
<comment type="miscellaneous">
    <text evidence="4">The viral particles present in feces and bile are non-enveloped, while those in circulating blood and culture supernatants are covered with a cellular membrane (quasi-enveloped).</text>
</comment>
<comment type="similarity">
    <text evidence="8">Belongs to the hepevirus capsid protein family.</text>
</comment>
<comment type="sequence caution" evidence="8">
    <conflict type="erroneous initiation">
        <sequence resource="EMBL-CDS" id="CAB83210"/>
    </conflict>
    <text>Truncated N-terminus.</text>
</comment>
<gene>
    <name type="ORF">ORF2</name>
</gene>
<dbReference type="EMBL" id="AJ272108">
    <property type="protein sequence ID" value="CAB83210.1"/>
    <property type="status" value="ALT_INIT"/>
    <property type="molecule type" value="Genomic_RNA"/>
</dbReference>
<dbReference type="PDB" id="3HAG">
    <property type="method" value="X-ray"/>
    <property type="resolution" value="3.50 A"/>
    <property type="chains" value="A=110-606"/>
</dbReference>
<dbReference type="PDBsum" id="3HAG"/>
<dbReference type="SMR" id="Q9IVZ8"/>
<dbReference type="DIP" id="DIP-48927N"/>
<dbReference type="ABCD" id="Q9IVZ8">
    <property type="antibodies" value="1 sequenced antibody"/>
</dbReference>
<dbReference type="EvolutionaryTrace" id="Q9IVZ8"/>
<dbReference type="Proteomes" id="UP000007242">
    <property type="component" value="Genome"/>
</dbReference>
<dbReference type="GO" id="GO:0005576">
    <property type="term" value="C:extracellular region"/>
    <property type="evidence" value="ECO:0007669"/>
    <property type="project" value="UniProtKB-SubCell"/>
</dbReference>
<dbReference type="GO" id="GO:0044165">
    <property type="term" value="C:host cell endoplasmic reticulum"/>
    <property type="evidence" value="ECO:0007669"/>
    <property type="project" value="UniProtKB-SubCell"/>
</dbReference>
<dbReference type="GO" id="GO:0044177">
    <property type="term" value="C:host cell Golgi apparatus"/>
    <property type="evidence" value="ECO:0007669"/>
    <property type="project" value="UniProtKB-SubCell"/>
</dbReference>
<dbReference type="GO" id="GO:0042025">
    <property type="term" value="C:host cell nucleus"/>
    <property type="evidence" value="ECO:0007669"/>
    <property type="project" value="UniProtKB-SubCell"/>
</dbReference>
<dbReference type="GO" id="GO:0044228">
    <property type="term" value="C:host cell surface"/>
    <property type="evidence" value="ECO:0007669"/>
    <property type="project" value="UniProtKB-SubCell"/>
</dbReference>
<dbReference type="GO" id="GO:0039615">
    <property type="term" value="C:T=1 icosahedral viral capsid"/>
    <property type="evidence" value="ECO:0007669"/>
    <property type="project" value="UniProtKB-KW"/>
</dbReference>
<dbReference type="GO" id="GO:0042802">
    <property type="term" value="F:identical protein binding"/>
    <property type="evidence" value="ECO:0000353"/>
    <property type="project" value="IntAct"/>
</dbReference>
<dbReference type="GO" id="GO:0003723">
    <property type="term" value="F:RNA binding"/>
    <property type="evidence" value="ECO:0007669"/>
    <property type="project" value="UniProtKB-KW"/>
</dbReference>
<dbReference type="GO" id="GO:0005198">
    <property type="term" value="F:structural molecule activity"/>
    <property type="evidence" value="ECO:0007669"/>
    <property type="project" value="InterPro"/>
</dbReference>
<dbReference type="FunFam" id="2.40.30.190:FF:000001">
    <property type="entry name" value="Secreted protein ORF2"/>
    <property type="match status" value="1"/>
</dbReference>
<dbReference type="FunFam" id="2.60.120.20:FF:000010">
    <property type="entry name" value="Secreted protein ORF2"/>
    <property type="match status" value="1"/>
</dbReference>
<dbReference type="Gene3D" id="2.40.30.190">
    <property type="match status" value="1"/>
</dbReference>
<dbReference type="Gene3D" id="2.60.120.20">
    <property type="match status" value="1"/>
</dbReference>
<dbReference type="InterPro" id="IPR048794">
    <property type="entry name" value="SP2_C"/>
</dbReference>
<dbReference type="InterPro" id="IPR048802">
    <property type="entry name" value="SP2_M"/>
</dbReference>
<dbReference type="InterPro" id="IPR004261">
    <property type="entry name" value="SP2_N"/>
</dbReference>
<dbReference type="InterPro" id="IPR029053">
    <property type="entry name" value="Viral_coat"/>
</dbReference>
<dbReference type="Pfam" id="PF03014">
    <property type="entry name" value="SP2"/>
    <property type="match status" value="1"/>
</dbReference>
<dbReference type="Pfam" id="PF20752">
    <property type="entry name" value="SP2_C"/>
    <property type="match status" value="1"/>
</dbReference>
<dbReference type="Pfam" id="PF20751">
    <property type="entry name" value="SP2_M"/>
    <property type="match status" value="1"/>
</dbReference>
<dbReference type="SUPFAM" id="SSF88633">
    <property type="entry name" value="Positive stranded ssRNA viruses"/>
    <property type="match status" value="1"/>
</dbReference>
<name>CAPSD_HEVCT</name>